<evidence type="ECO:0000250" key="1"/>
<evidence type="ECO:0000303" key="2">
    <source>
    </source>
</evidence>
<evidence type="ECO:0000305" key="3"/>
<keyword id="KW-0025">Alternative splicing</keyword>
<keyword id="KW-0963">Cytoplasm</keyword>
<keyword id="KW-0378">Hydrolase</keyword>
<keyword id="KW-0464">Manganese</keyword>
<keyword id="KW-0479">Metal-binding</keyword>
<keyword id="KW-0904">Protein phosphatase</keyword>
<keyword id="KW-1185">Reference proteome</keyword>
<comment type="catalytic activity">
    <reaction>
        <text>O-phospho-L-seryl-[protein] + H2O = L-seryl-[protein] + phosphate</text>
        <dbReference type="Rhea" id="RHEA:20629"/>
        <dbReference type="Rhea" id="RHEA-COMP:9863"/>
        <dbReference type="Rhea" id="RHEA-COMP:11604"/>
        <dbReference type="ChEBI" id="CHEBI:15377"/>
        <dbReference type="ChEBI" id="CHEBI:29999"/>
        <dbReference type="ChEBI" id="CHEBI:43474"/>
        <dbReference type="ChEBI" id="CHEBI:83421"/>
        <dbReference type="EC" id="3.1.3.16"/>
    </reaction>
</comment>
<comment type="catalytic activity">
    <reaction>
        <text>O-phospho-L-threonyl-[protein] + H2O = L-threonyl-[protein] + phosphate</text>
        <dbReference type="Rhea" id="RHEA:47004"/>
        <dbReference type="Rhea" id="RHEA-COMP:11060"/>
        <dbReference type="Rhea" id="RHEA-COMP:11605"/>
        <dbReference type="ChEBI" id="CHEBI:15377"/>
        <dbReference type="ChEBI" id="CHEBI:30013"/>
        <dbReference type="ChEBI" id="CHEBI:43474"/>
        <dbReference type="ChEBI" id="CHEBI:61977"/>
        <dbReference type="EC" id="3.1.3.16"/>
    </reaction>
</comment>
<comment type="cofactor">
    <cofactor evidence="1">
        <name>Mn(2+)</name>
        <dbReference type="ChEBI" id="CHEBI:29035"/>
    </cofactor>
    <text evidence="1">Binds 2 manganese ions per subunit.</text>
</comment>
<comment type="subcellular location">
    <subcellularLocation>
        <location evidence="1">Cytoplasm</location>
    </subcellularLocation>
</comment>
<comment type="alternative products">
    <event type="alternative splicing"/>
    <isoform>
        <id>Q0E2S4-1</id>
        <id>Q9XGT7-1</id>
        <name>1</name>
        <sequence type="displayed"/>
    </isoform>
    <isoform>
        <id>Q0E2S4-2</id>
        <id>Q9XGT7-2</id>
        <name>2</name>
        <sequence type="described" ref="VSP_019124"/>
    </isoform>
</comment>
<comment type="similarity">
    <text evidence="3">Belongs to the PPP phosphatase family. PP-2A subfamily.</text>
</comment>
<organism>
    <name type="scientific">Oryza sativa subsp. japonica</name>
    <name type="common">Rice</name>
    <dbReference type="NCBI Taxonomy" id="39947"/>
    <lineage>
        <taxon>Eukaryota</taxon>
        <taxon>Viridiplantae</taxon>
        <taxon>Streptophyta</taxon>
        <taxon>Embryophyta</taxon>
        <taxon>Tracheophyta</taxon>
        <taxon>Spermatophyta</taxon>
        <taxon>Magnoliopsida</taxon>
        <taxon>Liliopsida</taxon>
        <taxon>Poales</taxon>
        <taxon>Poaceae</taxon>
        <taxon>BOP clade</taxon>
        <taxon>Oryzoideae</taxon>
        <taxon>Oryzeae</taxon>
        <taxon>Oryzinae</taxon>
        <taxon>Oryza</taxon>
        <taxon>Oryza sativa</taxon>
    </lineage>
</organism>
<proteinExistence type="evidence at transcript level"/>
<gene>
    <name type="primary">PP2A3</name>
    <name type="ordered locus">Os02g0217600</name>
    <name type="ordered locus">LOC_Os02g12580</name>
    <name type="ORF">OsJ_005728</name>
    <name type="ORF">P0027A02.2-1</name>
    <name type="ORF">P0027A02.2-2</name>
</gene>
<name>PP2A3_ORYSJ</name>
<protein>
    <recommendedName>
        <fullName>Serine/threonine-protein phosphatase PP2A-3 catalytic subunit</fullName>
        <ecNumber>3.1.3.16</ecNumber>
    </recommendedName>
</protein>
<accession>Q0E2S4</accession>
<accession>B7EL47</accession>
<accession>Q6Z6L8</accession>
<accession>Q6Z6L9</accession>
<accession>Q9XGT7</accession>
<sequence>MPSSHGDLDRQIAQLRECKHLAEGEVRALCEQAKAILMEEWNVQPVRCPVTVCGDIHGQFYDLIELFRIGGEAPDTNYLFMGDYVDRGYYSVETVSLLVALKVRYRDRITILRGNHESRQITQVYGFYDECLRKYGNANVWKYFTDLFDYLPLTALIENQVFCLHGGLSPSLDTLDNIRALDRIQEVPHEGPMCDLLWSDPDDRCGWGISPRGAGYTFGQDIAQQFNHTNGLSLISRAHQLVMEGFNWCQDKNVVTVFSAPNYCYRCGNMAAILEIGENMDQNFLQFDPAPRQIEPDTTRKTPDYFL</sequence>
<dbReference type="EC" id="3.1.3.16"/>
<dbReference type="EMBL" id="AP004996">
    <property type="protein sequence ID" value="BAD17174.1"/>
    <property type="molecule type" value="Genomic_DNA"/>
</dbReference>
<dbReference type="EMBL" id="AP004996">
    <property type="protein sequence ID" value="BAD17175.1"/>
    <property type="molecule type" value="Genomic_DNA"/>
</dbReference>
<dbReference type="EMBL" id="AP008208">
    <property type="protein sequence ID" value="BAF08214.1"/>
    <property type="molecule type" value="Genomic_DNA"/>
</dbReference>
<dbReference type="EMBL" id="AP014958">
    <property type="protein sequence ID" value="BAS77665.1"/>
    <property type="molecule type" value="Genomic_DNA"/>
</dbReference>
<dbReference type="EMBL" id="AP014958">
    <property type="protein sequence ID" value="BAS77666.1"/>
    <property type="molecule type" value="Genomic_DNA"/>
</dbReference>
<dbReference type="EMBL" id="CM000139">
    <property type="status" value="NOT_ANNOTATED_CDS"/>
    <property type="molecule type" value="Genomic_DNA"/>
</dbReference>
<dbReference type="EMBL" id="AK060905">
    <property type="status" value="NOT_ANNOTATED_CDS"/>
    <property type="molecule type" value="mRNA"/>
</dbReference>
<dbReference type="EMBL" id="AK072676">
    <property type="protein sequence ID" value="BAG93094.1"/>
    <property type="molecule type" value="mRNA"/>
</dbReference>
<dbReference type="RefSeq" id="XP_015626269.1">
    <property type="nucleotide sequence ID" value="XM_015770783.1"/>
</dbReference>
<dbReference type="SMR" id="Q0E2S4"/>
<dbReference type="FunCoup" id="Q0E2S4">
    <property type="interactions" value="2374"/>
</dbReference>
<dbReference type="IntAct" id="Q0E2S4">
    <property type="interactions" value="2"/>
</dbReference>
<dbReference type="STRING" id="39947.Q0E2S4"/>
<dbReference type="PaxDb" id="39947-Q0E2S4"/>
<dbReference type="EnsemblPlants" id="Os02t0217600-02">
    <molecule id="Q0E2S4-1"/>
    <property type="protein sequence ID" value="Os02t0217600-02"/>
    <property type="gene ID" value="Os02g0217600"/>
</dbReference>
<dbReference type="Gramene" id="Os02t0217600-02">
    <molecule id="Q0E2S4-1"/>
    <property type="protein sequence ID" value="Os02t0217600-02"/>
    <property type="gene ID" value="Os02g0217600"/>
</dbReference>
<dbReference type="KEGG" id="dosa:Os02g0217600"/>
<dbReference type="eggNOG" id="KOG0371">
    <property type="taxonomic scope" value="Eukaryota"/>
</dbReference>
<dbReference type="HOGENOM" id="CLU_004962_8_1_1"/>
<dbReference type="InParanoid" id="Q0E2S4"/>
<dbReference type="OMA" id="CMKVRYP"/>
<dbReference type="OrthoDB" id="1930084at2759"/>
<dbReference type="Proteomes" id="UP000000763">
    <property type="component" value="Chromosome 2"/>
</dbReference>
<dbReference type="Proteomes" id="UP000007752">
    <property type="component" value="Chromosome 2"/>
</dbReference>
<dbReference type="Proteomes" id="UP000059680">
    <property type="component" value="Chromosome 2"/>
</dbReference>
<dbReference type="ExpressionAtlas" id="Q0E2S4">
    <property type="expression patterns" value="baseline and differential"/>
</dbReference>
<dbReference type="GO" id="GO:0005829">
    <property type="term" value="C:cytosol"/>
    <property type="evidence" value="ECO:0000318"/>
    <property type="project" value="GO_Central"/>
</dbReference>
<dbReference type="GO" id="GO:0005634">
    <property type="term" value="C:nucleus"/>
    <property type="evidence" value="ECO:0000318"/>
    <property type="project" value="GO_Central"/>
</dbReference>
<dbReference type="GO" id="GO:0046872">
    <property type="term" value="F:metal ion binding"/>
    <property type="evidence" value="ECO:0007669"/>
    <property type="project" value="UniProtKB-KW"/>
</dbReference>
<dbReference type="GO" id="GO:0004722">
    <property type="term" value="F:protein serine/threonine phosphatase activity"/>
    <property type="evidence" value="ECO:0000318"/>
    <property type="project" value="GO_Central"/>
</dbReference>
<dbReference type="GO" id="GO:0000278">
    <property type="term" value="P:mitotic cell cycle"/>
    <property type="evidence" value="ECO:0000318"/>
    <property type="project" value="GO_Central"/>
</dbReference>
<dbReference type="CDD" id="cd07415">
    <property type="entry name" value="MPP_PP2A_PP4_PP6"/>
    <property type="match status" value="1"/>
</dbReference>
<dbReference type="FunFam" id="3.60.21.10:FF:000003">
    <property type="entry name" value="Serine/threonine-protein phosphatase"/>
    <property type="match status" value="1"/>
</dbReference>
<dbReference type="Gene3D" id="3.60.21.10">
    <property type="match status" value="1"/>
</dbReference>
<dbReference type="InterPro" id="IPR004843">
    <property type="entry name" value="Calcineurin-like_PHP_ApaH"/>
</dbReference>
<dbReference type="InterPro" id="IPR029052">
    <property type="entry name" value="Metallo-depent_PP-like"/>
</dbReference>
<dbReference type="InterPro" id="IPR047129">
    <property type="entry name" value="PPA2-like"/>
</dbReference>
<dbReference type="InterPro" id="IPR006186">
    <property type="entry name" value="Ser/Thr-sp_prot-phosphatase"/>
</dbReference>
<dbReference type="PANTHER" id="PTHR45619">
    <property type="entry name" value="SERINE/THREONINE-PROTEIN PHOSPHATASE PP2A-RELATED"/>
    <property type="match status" value="1"/>
</dbReference>
<dbReference type="Pfam" id="PF00149">
    <property type="entry name" value="Metallophos"/>
    <property type="match status" value="1"/>
</dbReference>
<dbReference type="PRINTS" id="PR00114">
    <property type="entry name" value="STPHPHTASE"/>
</dbReference>
<dbReference type="SMART" id="SM00156">
    <property type="entry name" value="PP2Ac"/>
    <property type="match status" value="1"/>
</dbReference>
<dbReference type="SUPFAM" id="SSF56300">
    <property type="entry name" value="Metallo-dependent phosphatases"/>
    <property type="match status" value="1"/>
</dbReference>
<dbReference type="PROSITE" id="PS00125">
    <property type="entry name" value="SER_THR_PHOSPHATASE"/>
    <property type="match status" value="1"/>
</dbReference>
<feature type="chain" id="PRO_0000058863" description="Serine/threonine-protein phosphatase PP2A-3 catalytic subunit">
    <location>
        <begin position="1"/>
        <end position="307"/>
    </location>
</feature>
<feature type="active site" description="Proton donor" evidence="1">
    <location>
        <position position="116"/>
    </location>
</feature>
<feature type="binding site" evidence="1">
    <location>
        <position position="55"/>
    </location>
    <ligand>
        <name>Mn(2+)</name>
        <dbReference type="ChEBI" id="CHEBI:29035"/>
        <label>1</label>
    </ligand>
</feature>
<feature type="binding site" evidence="1">
    <location>
        <position position="57"/>
    </location>
    <ligand>
        <name>Mn(2+)</name>
        <dbReference type="ChEBI" id="CHEBI:29035"/>
        <label>1</label>
    </ligand>
</feature>
<feature type="binding site" evidence="1">
    <location>
        <position position="83"/>
    </location>
    <ligand>
        <name>Mn(2+)</name>
        <dbReference type="ChEBI" id="CHEBI:29035"/>
        <label>1</label>
    </ligand>
</feature>
<feature type="binding site" evidence="1">
    <location>
        <position position="83"/>
    </location>
    <ligand>
        <name>Mn(2+)</name>
        <dbReference type="ChEBI" id="CHEBI:29035"/>
        <label>2</label>
    </ligand>
</feature>
<feature type="binding site" evidence="1">
    <location>
        <position position="115"/>
    </location>
    <ligand>
        <name>Mn(2+)</name>
        <dbReference type="ChEBI" id="CHEBI:29035"/>
        <label>2</label>
    </ligand>
</feature>
<feature type="binding site" evidence="1">
    <location>
        <position position="165"/>
    </location>
    <ligand>
        <name>Mn(2+)</name>
        <dbReference type="ChEBI" id="CHEBI:29035"/>
        <label>2</label>
    </ligand>
</feature>
<feature type="binding site" evidence="1">
    <location>
        <position position="239"/>
    </location>
    <ligand>
        <name>Mn(2+)</name>
        <dbReference type="ChEBI" id="CHEBI:29035"/>
        <label>2</label>
    </ligand>
</feature>
<feature type="splice variant" id="VSP_019124" description="In isoform 2." evidence="2">
    <location>
        <begin position="68"/>
        <end position="80"/>
    </location>
</feature>
<reference key="1">
    <citation type="journal article" date="2005" name="Nature">
        <title>The map-based sequence of the rice genome.</title>
        <authorList>
            <consortium name="International rice genome sequencing project (IRGSP)"/>
        </authorList>
    </citation>
    <scope>NUCLEOTIDE SEQUENCE [LARGE SCALE GENOMIC DNA]</scope>
    <source>
        <strain>cv. Nipponbare</strain>
    </source>
</reference>
<reference key="2">
    <citation type="journal article" date="2008" name="Nucleic Acids Res.">
        <title>The rice annotation project database (RAP-DB): 2008 update.</title>
        <authorList>
            <consortium name="The rice annotation project (RAP)"/>
        </authorList>
    </citation>
    <scope>GENOME REANNOTATION</scope>
    <source>
        <strain>cv. Nipponbare</strain>
    </source>
</reference>
<reference key="3">
    <citation type="journal article" date="2013" name="Rice">
        <title>Improvement of the Oryza sativa Nipponbare reference genome using next generation sequence and optical map data.</title>
        <authorList>
            <person name="Kawahara Y."/>
            <person name="de la Bastide M."/>
            <person name="Hamilton J.P."/>
            <person name="Kanamori H."/>
            <person name="McCombie W.R."/>
            <person name="Ouyang S."/>
            <person name="Schwartz D.C."/>
            <person name="Tanaka T."/>
            <person name="Wu J."/>
            <person name="Zhou S."/>
            <person name="Childs K.L."/>
            <person name="Davidson R.M."/>
            <person name="Lin H."/>
            <person name="Quesada-Ocampo L."/>
            <person name="Vaillancourt B."/>
            <person name="Sakai H."/>
            <person name="Lee S.S."/>
            <person name="Kim J."/>
            <person name="Numa H."/>
            <person name="Itoh T."/>
            <person name="Buell C.R."/>
            <person name="Matsumoto T."/>
        </authorList>
    </citation>
    <scope>GENOME REANNOTATION</scope>
    <source>
        <strain>cv. Nipponbare</strain>
    </source>
</reference>
<reference key="4">
    <citation type="journal article" date="2005" name="PLoS Biol.">
        <title>The genomes of Oryza sativa: a history of duplications.</title>
        <authorList>
            <person name="Yu J."/>
            <person name="Wang J."/>
            <person name="Lin W."/>
            <person name="Li S."/>
            <person name="Li H."/>
            <person name="Zhou J."/>
            <person name="Ni P."/>
            <person name="Dong W."/>
            <person name="Hu S."/>
            <person name="Zeng C."/>
            <person name="Zhang J."/>
            <person name="Zhang Y."/>
            <person name="Li R."/>
            <person name="Xu Z."/>
            <person name="Li S."/>
            <person name="Li X."/>
            <person name="Zheng H."/>
            <person name="Cong L."/>
            <person name="Lin L."/>
            <person name="Yin J."/>
            <person name="Geng J."/>
            <person name="Li G."/>
            <person name="Shi J."/>
            <person name="Liu J."/>
            <person name="Lv H."/>
            <person name="Li J."/>
            <person name="Wang J."/>
            <person name="Deng Y."/>
            <person name="Ran L."/>
            <person name="Shi X."/>
            <person name="Wang X."/>
            <person name="Wu Q."/>
            <person name="Li C."/>
            <person name="Ren X."/>
            <person name="Wang J."/>
            <person name="Wang X."/>
            <person name="Li D."/>
            <person name="Liu D."/>
            <person name="Zhang X."/>
            <person name="Ji Z."/>
            <person name="Zhao W."/>
            <person name="Sun Y."/>
            <person name="Zhang Z."/>
            <person name="Bao J."/>
            <person name="Han Y."/>
            <person name="Dong L."/>
            <person name="Ji J."/>
            <person name="Chen P."/>
            <person name="Wu S."/>
            <person name="Liu J."/>
            <person name="Xiao Y."/>
            <person name="Bu D."/>
            <person name="Tan J."/>
            <person name="Yang L."/>
            <person name="Ye C."/>
            <person name="Zhang J."/>
            <person name="Xu J."/>
            <person name="Zhou Y."/>
            <person name="Yu Y."/>
            <person name="Zhang B."/>
            <person name="Zhuang S."/>
            <person name="Wei H."/>
            <person name="Liu B."/>
            <person name="Lei M."/>
            <person name="Yu H."/>
            <person name="Li Y."/>
            <person name="Xu H."/>
            <person name="Wei S."/>
            <person name="He X."/>
            <person name="Fang L."/>
            <person name="Zhang Z."/>
            <person name="Zhang Y."/>
            <person name="Huang X."/>
            <person name="Su Z."/>
            <person name="Tong W."/>
            <person name="Li J."/>
            <person name="Tong Z."/>
            <person name="Li S."/>
            <person name="Ye J."/>
            <person name="Wang L."/>
            <person name="Fang L."/>
            <person name="Lei T."/>
            <person name="Chen C.-S."/>
            <person name="Chen H.-C."/>
            <person name="Xu Z."/>
            <person name="Li H."/>
            <person name="Huang H."/>
            <person name="Zhang F."/>
            <person name="Xu H."/>
            <person name="Li N."/>
            <person name="Zhao C."/>
            <person name="Li S."/>
            <person name="Dong L."/>
            <person name="Huang Y."/>
            <person name="Li L."/>
            <person name="Xi Y."/>
            <person name="Qi Q."/>
            <person name="Li W."/>
            <person name="Zhang B."/>
            <person name="Hu W."/>
            <person name="Zhang Y."/>
            <person name="Tian X."/>
            <person name="Jiao Y."/>
            <person name="Liang X."/>
            <person name="Jin J."/>
            <person name="Gao L."/>
            <person name="Zheng W."/>
            <person name="Hao B."/>
            <person name="Liu S.-M."/>
            <person name="Wang W."/>
            <person name="Yuan L."/>
            <person name="Cao M."/>
            <person name="McDermott J."/>
            <person name="Samudrala R."/>
            <person name="Wang J."/>
            <person name="Wong G.K.-S."/>
            <person name="Yang H."/>
        </authorList>
    </citation>
    <scope>NUCLEOTIDE SEQUENCE [LARGE SCALE GENOMIC DNA]</scope>
    <source>
        <strain>cv. Nipponbare</strain>
    </source>
</reference>
<reference key="5">
    <citation type="journal article" date="2003" name="Science">
        <title>Collection, mapping, and annotation of over 28,000 cDNA clones from japonica rice.</title>
        <authorList>
            <consortium name="The rice full-length cDNA consortium"/>
        </authorList>
    </citation>
    <scope>NUCLEOTIDE SEQUENCE [LARGE SCALE MRNA] (ISOFORMS 1 AND 2)</scope>
    <source>
        <strain>cv. Nipponbare</strain>
    </source>
</reference>